<evidence type="ECO:0000250" key="1">
    <source>
        <dbReference type="UniProtKB" id="P03612"/>
    </source>
</evidence>
<evidence type="ECO:0000269" key="2">
    <source>
    </source>
</evidence>
<evidence type="ECO:0000269" key="3">
    <source>
    </source>
</evidence>
<evidence type="ECO:0000305" key="4"/>
<evidence type="ECO:0000305" key="5">
    <source>
    </source>
</evidence>
<evidence type="ECO:0007744" key="6">
    <source>
        <dbReference type="PDB" id="2VF9"/>
    </source>
</evidence>
<evidence type="ECO:0007744" key="7">
    <source>
        <dbReference type="PDB" id="4ANG"/>
    </source>
</evidence>
<evidence type="ECO:0007829" key="8">
    <source>
        <dbReference type="PDB" id="2VF9"/>
    </source>
</evidence>
<evidence type="ECO:0007829" key="9">
    <source>
        <dbReference type="PDB" id="4ANG"/>
    </source>
</evidence>
<reference key="1">
    <citation type="journal article" date="1979" name="Eur. J. Biochem.">
        <title>The primary structure of the coat protein of the broad-host-range RNA bacteriophage PRR1.</title>
        <authorList>
            <person name="Dhaese P."/>
            <person name="Vandekerckhove J."/>
            <person name="van Montagu M."/>
        </authorList>
    </citation>
    <scope>PROTEIN SEQUENCE</scope>
</reference>
<reference evidence="6" key="2">
    <citation type="journal article" date="2008" name="J. Mol. Biol.">
        <title>The capsid of the small RNA phage PRR1 is stabilized by metal ions.</title>
        <authorList>
            <person name="Persson M."/>
            <person name="Tars K."/>
            <person name="Liljas L."/>
        </authorList>
    </citation>
    <scope>X-RAY CRYSTALLOGRAPHY (3.50 ANGSTROMS)</scope>
    <scope>SUBUNIT</scope>
</reference>
<reference evidence="7" key="3">
    <citation type="journal article" date="2013" name="Acta Crystallogr. D">
        <title>PRR1 coat protein binding to its RNA translational operator.</title>
        <authorList>
            <person name="Persson M."/>
            <person name="Tars K."/>
            <person name="Liljas L."/>
        </authorList>
    </citation>
    <scope>X-RAY CRYSTALLOGRAPHY (3.50 ANGSTROMS) IN COMPLEX WITH RNA</scope>
    <scope>RNA-BINDING</scope>
    <scope>FUNCTION</scope>
    <scope>SUBUNIT</scope>
</reference>
<dbReference type="PIR" id="A04225">
    <property type="entry name" value="VCBPP1"/>
</dbReference>
<dbReference type="PDB" id="2VF9">
    <property type="method" value="X-ray"/>
    <property type="resolution" value="3.50 A"/>
    <property type="chains" value="A/B/C=1-131"/>
</dbReference>
<dbReference type="PDB" id="4ANG">
    <property type="method" value="X-ray"/>
    <property type="resolution" value="3.50 A"/>
    <property type="chains" value="A/B/C=1-131"/>
</dbReference>
<dbReference type="PDBsum" id="2VF9"/>
<dbReference type="PDBsum" id="4ANG"/>
<dbReference type="SMR" id="P03616"/>
<dbReference type="EvolutionaryTrace" id="P03616"/>
<dbReference type="GO" id="GO:0039617">
    <property type="term" value="C:T=3 icosahedral viral capsid"/>
    <property type="evidence" value="ECO:0007669"/>
    <property type="project" value="UniProtKB-KW"/>
</dbReference>
<dbReference type="GO" id="GO:0003723">
    <property type="term" value="F:RNA binding"/>
    <property type="evidence" value="ECO:0007669"/>
    <property type="project" value="UniProtKB-KW"/>
</dbReference>
<dbReference type="GO" id="GO:0005198">
    <property type="term" value="F:structural molecule activity"/>
    <property type="evidence" value="ECO:0007669"/>
    <property type="project" value="InterPro"/>
</dbReference>
<dbReference type="Gene3D" id="3.30.380.10">
    <property type="entry name" value="MS2 Viral Coat Protein"/>
    <property type="match status" value="1"/>
</dbReference>
<dbReference type="InterPro" id="IPR002703">
    <property type="entry name" value="Levivir_coat"/>
</dbReference>
<dbReference type="InterPro" id="IPR015954">
    <property type="entry name" value="Phage_RNA-type_capsid"/>
</dbReference>
<dbReference type="Pfam" id="PF01819">
    <property type="entry name" value="Levi_coat"/>
    <property type="match status" value="1"/>
</dbReference>
<dbReference type="SUPFAM" id="SSF55405">
    <property type="entry name" value="RNA bacteriophage capsid protein"/>
    <property type="match status" value="1"/>
</dbReference>
<protein>
    <recommendedName>
        <fullName>Capsid protein</fullName>
        <shortName>CP</shortName>
    </recommendedName>
    <alternativeName>
        <fullName>Coat protein</fullName>
    </alternativeName>
</protein>
<organism>
    <name type="scientific">Pseudomonas phage PRR1</name>
    <name type="common">Bacteriophage PRR1</name>
    <dbReference type="NCBI Taxonomy" id="12024"/>
    <lineage>
        <taxon>Viruses</taxon>
        <taxon>Riboviria</taxon>
        <taxon>Orthornavirae</taxon>
        <taxon>Lenarviricota</taxon>
        <taxon>Leviviricetes</taxon>
        <taxon>Norzivirales</taxon>
        <taxon>Fiersviridae</taxon>
        <taxon>Perrunavirus</taxon>
        <taxon>Perrunavirus olsenii</taxon>
    </lineage>
</organism>
<feature type="chain" id="PRO_0000164845" description="Capsid protein">
    <location>
        <begin position="1"/>
        <end position="131"/>
    </location>
</feature>
<feature type="binding site" evidence="2 3">
    <location>
        <position position="2"/>
    </location>
    <ligand>
        <name>Ca(2+)</name>
        <dbReference type="ChEBI" id="CHEBI:29108"/>
        <note>structural</note>
    </ligand>
</feature>
<feature type="binding site" evidence="2 3">
    <location>
        <position position="131"/>
    </location>
    <ligand>
        <name>Ca(2+)</name>
        <dbReference type="ChEBI" id="CHEBI:29108"/>
        <note>structural</note>
    </ligand>
</feature>
<feature type="strand" evidence="8">
    <location>
        <begin position="6"/>
        <end position="9"/>
    </location>
</feature>
<feature type="strand" evidence="8">
    <location>
        <begin position="12"/>
        <end position="14"/>
    </location>
</feature>
<feature type="strand" evidence="8">
    <location>
        <begin position="17"/>
        <end position="34"/>
    </location>
</feature>
<feature type="strand" evidence="9">
    <location>
        <begin position="36"/>
        <end position="41"/>
    </location>
</feature>
<feature type="strand" evidence="8">
    <location>
        <begin position="43"/>
        <end position="51"/>
    </location>
</feature>
<feature type="strand" evidence="8">
    <location>
        <begin position="55"/>
        <end position="73"/>
    </location>
</feature>
<feature type="strand" evidence="8">
    <location>
        <begin position="76"/>
        <end position="94"/>
    </location>
</feature>
<feature type="helix" evidence="8">
    <location>
        <begin position="99"/>
        <end position="112"/>
    </location>
</feature>
<feature type="strand" evidence="8">
    <location>
        <begin position="113"/>
        <end position="116"/>
    </location>
</feature>
<feature type="helix" evidence="8">
    <location>
        <begin position="118"/>
        <end position="124"/>
    </location>
</feature>
<accession>P03616</accession>
<proteinExistence type="evidence at protein level"/>
<name>CAPSD_BPPRR</name>
<organismHost>
    <name type="scientific">Pseudomonas</name>
    <dbReference type="NCBI Taxonomy" id="286"/>
</organismHost>
<keyword id="KW-0002">3D-structure</keyword>
<keyword id="KW-0167">Capsid protein</keyword>
<keyword id="KW-0903">Direct protein sequencing</keyword>
<keyword id="KW-0694">RNA-binding</keyword>
<keyword id="KW-1142">T=3 icosahedral capsid protein</keyword>
<keyword id="KW-0946">Virion</keyword>
<comment type="function">
    <text evidence="1">Capsid protein self-assembles to form an icosahedral capsid with a T=3 symmetry, about 26 nm in diameter, and consisting of 89 capsid proteins dimers (178 capsid proteins). Involved in viral genome encapsidation through the interaction between a capsid protein dimer and the multiple packaging signals present in the RNA genome. The capsid also contains 1 copy of the A2 maturation protein.</text>
</comment>
<comment type="function">
    <text evidence="1 5">Acts as a translational repressor of viral replicase synthesis late in infection. This latter function is the result of capsid protein interaction with an RNA hairpin which contains the replicase ribosome-binding site.</text>
</comment>
<comment type="subunit">
    <text evidence="1 2 3">Homodimer (PubMed:18786545, PubMed:23519411). The capsid proteins form dimers that assemble by group of 5. Twelve such pentamers are linked together with free dimers. The homodimers binds to the viral RNA via an operator hairpin, but also to many other RNA sequences in the viral genome; this interaction probably shifts the virus from the replicative to the assembly phase and ensures specific encapsidation of the viral genome.</text>
</comment>
<comment type="subcellular location">
    <subcellularLocation>
        <location evidence="1">Virion</location>
    </subcellularLocation>
    <text evidence="1">The shell is composed of 178 copies of the capsid protein and 1 copy of the maturation protein.</text>
</comment>
<comment type="similarity">
    <text evidence="4">Belongs to the Leviviricetes capsid protein family.</text>
</comment>
<sequence length="131" mass="14536">AQLQNLVLKDREATPNDHTFVPRDIRDNVGEVVESTGVPIGESRFTISLRKTSNGRYKSTLKLVVPVVQSQTVNGIVTPVVVRTSYVTVDFDYDARSTTKERNNFVGMIADALKADLMLVHDTIVNLQGVY</sequence>